<organism>
    <name type="scientific">Gazella dorcas</name>
    <name type="common">Dorcas gazelle</name>
    <dbReference type="NCBI Taxonomy" id="37751"/>
    <lineage>
        <taxon>Eukaryota</taxon>
        <taxon>Metazoa</taxon>
        <taxon>Chordata</taxon>
        <taxon>Craniata</taxon>
        <taxon>Vertebrata</taxon>
        <taxon>Euteleostomi</taxon>
        <taxon>Mammalia</taxon>
        <taxon>Eutheria</taxon>
        <taxon>Laurasiatheria</taxon>
        <taxon>Artiodactyla</taxon>
        <taxon>Ruminantia</taxon>
        <taxon>Pecora</taxon>
        <taxon>Bovidae</taxon>
        <taxon>Antilopinae</taxon>
        <taxon>Gazella</taxon>
    </lineage>
</organism>
<dbReference type="EC" id="7.1.1.9"/>
<dbReference type="EMBL" id="AF030482">
    <property type="protein sequence ID" value="AAB93621.1"/>
    <property type="molecule type" value="Genomic_DNA"/>
</dbReference>
<dbReference type="EMBL" id="AF030483">
    <property type="protein sequence ID" value="AAB93622.1"/>
    <property type="molecule type" value="Genomic_DNA"/>
</dbReference>
<dbReference type="EMBL" id="AF030484">
    <property type="protein sequence ID" value="AAB93623.1"/>
    <property type="molecule type" value="Genomic_DNA"/>
</dbReference>
<dbReference type="SMR" id="P68299"/>
<dbReference type="GO" id="GO:0005743">
    <property type="term" value="C:mitochondrial inner membrane"/>
    <property type="evidence" value="ECO:0007669"/>
    <property type="project" value="UniProtKB-SubCell"/>
</dbReference>
<dbReference type="GO" id="GO:0045277">
    <property type="term" value="C:respiratory chain complex IV"/>
    <property type="evidence" value="ECO:0000250"/>
    <property type="project" value="UniProtKB"/>
</dbReference>
<dbReference type="GO" id="GO:0004129">
    <property type="term" value="F:cytochrome-c oxidase activity"/>
    <property type="evidence" value="ECO:0007669"/>
    <property type="project" value="UniProtKB-EC"/>
</dbReference>
<dbReference type="GO" id="GO:0006123">
    <property type="term" value="P:mitochondrial electron transport, cytochrome c to oxygen"/>
    <property type="evidence" value="ECO:0007669"/>
    <property type="project" value="TreeGrafter"/>
</dbReference>
<dbReference type="GO" id="GO:0008535">
    <property type="term" value="P:respiratory chain complex IV assembly"/>
    <property type="evidence" value="ECO:0000250"/>
    <property type="project" value="UniProtKB"/>
</dbReference>
<dbReference type="CDD" id="cd01665">
    <property type="entry name" value="Cyt_c_Oxidase_III"/>
    <property type="match status" value="1"/>
</dbReference>
<dbReference type="FunFam" id="1.10.287.70:FF:000048">
    <property type="entry name" value="Cytochrome c oxidase subunit 3"/>
    <property type="match status" value="1"/>
</dbReference>
<dbReference type="FunFam" id="1.20.120.80:FF:000002">
    <property type="entry name" value="Cytochrome c oxidase subunit 3"/>
    <property type="match status" value="1"/>
</dbReference>
<dbReference type="Gene3D" id="1.10.287.70">
    <property type="match status" value="1"/>
</dbReference>
<dbReference type="Gene3D" id="1.20.120.80">
    <property type="entry name" value="Cytochrome c oxidase, subunit III, four-helix bundle"/>
    <property type="match status" value="1"/>
</dbReference>
<dbReference type="InterPro" id="IPR024791">
    <property type="entry name" value="Cyt_c/ubiquinol_Oxase_su3"/>
</dbReference>
<dbReference type="InterPro" id="IPR033945">
    <property type="entry name" value="Cyt_c_oxase_su3_dom"/>
</dbReference>
<dbReference type="InterPro" id="IPR000298">
    <property type="entry name" value="Cyt_c_oxidase-like_su3"/>
</dbReference>
<dbReference type="InterPro" id="IPR035973">
    <property type="entry name" value="Cyt_c_oxidase_su3-like_sf"/>
</dbReference>
<dbReference type="InterPro" id="IPR013833">
    <property type="entry name" value="Cyt_c_oxidase_su3_a-hlx"/>
</dbReference>
<dbReference type="PANTHER" id="PTHR11403:SF7">
    <property type="entry name" value="CYTOCHROME C OXIDASE SUBUNIT 3"/>
    <property type="match status" value="1"/>
</dbReference>
<dbReference type="PANTHER" id="PTHR11403">
    <property type="entry name" value="CYTOCHROME C OXIDASE SUBUNIT III"/>
    <property type="match status" value="1"/>
</dbReference>
<dbReference type="Pfam" id="PF00510">
    <property type="entry name" value="COX3"/>
    <property type="match status" value="1"/>
</dbReference>
<dbReference type="SUPFAM" id="SSF81452">
    <property type="entry name" value="Cytochrome c oxidase subunit III-like"/>
    <property type="match status" value="1"/>
</dbReference>
<dbReference type="PROSITE" id="PS50253">
    <property type="entry name" value="COX3"/>
    <property type="match status" value="1"/>
</dbReference>
<evidence type="ECO:0000250" key="1">
    <source>
        <dbReference type="UniProtKB" id="P00415"/>
    </source>
</evidence>
<evidence type="ECO:0000250" key="2">
    <source>
        <dbReference type="UniProtKB" id="P00420"/>
    </source>
</evidence>
<evidence type="ECO:0000305" key="3"/>
<keyword id="KW-0472">Membrane</keyword>
<keyword id="KW-0496">Mitochondrion</keyword>
<keyword id="KW-0999">Mitochondrion inner membrane</keyword>
<keyword id="KW-1278">Translocase</keyword>
<keyword id="KW-0812">Transmembrane</keyword>
<keyword id="KW-1133">Transmembrane helix</keyword>
<proteinExistence type="inferred from homology"/>
<feature type="chain" id="PRO_0000183778" description="Cytochrome c oxidase subunit 3">
    <location>
        <begin position="1"/>
        <end position="261"/>
    </location>
</feature>
<feature type="topological domain" description="Mitochondrial matrix" evidence="1">
    <location>
        <begin position="1"/>
        <end position="15"/>
    </location>
</feature>
<feature type="transmembrane region" description="Helical; Name=I" evidence="1">
    <location>
        <begin position="16"/>
        <end position="34"/>
    </location>
</feature>
<feature type="topological domain" description="Mitochondrial intermembrane" evidence="1">
    <location>
        <begin position="35"/>
        <end position="40"/>
    </location>
</feature>
<feature type="transmembrane region" description="Helical; Name=II" evidence="1">
    <location>
        <begin position="41"/>
        <end position="66"/>
    </location>
</feature>
<feature type="topological domain" description="Mitochondrial matrix" evidence="1">
    <location>
        <begin position="67"/>
        <end position="72"/>
    </location>
</feature>
<feature type="transmembrane region" description="Helical; Name=III" evidence="1">
    <location>
        <begin position="73"/>
        <end position="105"/>
    </location>
</feature>
<feature type="topological domain" description="Mitochondrial intermembrane" evidence="1">
    <location>
        <begin position="106"/>
        <end position="128"/>
    </location>
</feature>
<feature type="transmembrane region" description="Helical; Name=IV" evidence="1">
    <location>
        <begin position="129"/>
        <end position="152"/>
    </location>
</feature>
<feature type="topological domain" description="Mitochondrial matrix" evidence="1">
    <location>
        <begin position="153"/>
        <end position="155"/>
    </location>
</feature>
<feature type="transmembrane region" description="Helical; Name=V" evidence="1">
    <location>
        <begin position="156"/>
        <end position="183"/>
    </location>
</feature>
<feature type="topological domain" description="Mitochondrial intermembrane" evidence="1">
    <location>
        <begin position="184"/>
        <end position="190"/>
    </location>
</feature>
<feature type="transmembrane region" description="Helical; Name=VI" evidence="1">
    <location>
        <begin position="191"/>
        <end position="223"/>
    </location>
</feature>
<feature type="topological domain" description="Mitochondrial matrix" evidence="1">
    <location>
        <begin position="224"/>
        <end position="232"/>
    </location>
</feature>
<feature type="transmembrane region" description="Helical; Name=VII" evidence="1">
    <location>
        <begin position="233"/>
        <end position="256"/>
    </location>
</feature>
<feature type="topological domain" description="Mitochondrial intermembrane" evidence="1">
    <location>
        <begin position="257"/>
        <end position="261"/>
    </location>
</feature>
<feature type="sequence variant" description="In subsp. Pelzelni.">
    <original>V</original>
    <variation>I</variation>
    <location>
        <position position="91"/>
    </location>
</feature>
<accession>P68299</accession>
<accession>O47707</accession>
<accession>O47711</accession>
<accession>O48308</accession>
<sequence length="261" mass="29872">MTHQTHAYHMVNPSPWPLTGALSALLMTSGLIMWFHFNSTTLLMLGLTTNMLTMYQWWRDVVRESTFQGHHTPNVQKGLRYGMILFIISEVLFFTGFFWAFYHSSLAPTPELGGCWPPTGIHPLNPLEVPLLNTSVLLASGVSITWAHHSLMEGNRNHMLQALFITIALGVYFTLLQASEYYEAPFTISDGVYGSTFFVATGFHGLHVIIGSTFLIVCFFRQLKFHFTSSHHFGFEAAAWYWHFVDVVWLFLYVSIYWWGS</sequence>
<comment type="function">
    <text evidence="2">Component of the cytochrome c oxidase, the last enzyme in the mitochondrial electron transport chain which drives oxidative phosphorylation. The respiratory chain contains 3 multisubunit complexes succinate dehydrogenase (complex II, CII), ubiquinol-cytochrome c oxidoreductase (cytochrome b-c1 complex, complex III, CIII) and cytochrome c oxidase (complex IV, CIV), that cooperate to transfer electrons derived from NADH and succinate to molecular oxygen, creating an electrochemical gradient over the inner membrane that drives transmembrane transport and the ATP synthase. Cytochrome c oxidase is the component of the respiratory chain that catalyzes the reduction of oxygen to water. Electrons originating from reduced cytochrome c in the intermembrane space (IMS) are transferred via the dinuclear copper A center (CU(A)) of subunit 2 and heme A of subunit 1 to the active site in subunit 1, a binuclear center (BNC) formed by heme A3 and copper B (CU(B)). The BNC reduces molecular oxygen to 2 water molecules using 4 electrons from cytochrome c in the IMS and 4 protons from the mitochondrial matrix.</text>
</comment>
<comment type="catalytic activity">
    <reaction evidence="2">
        <text>4 Fe(II)-[cytochrome c] + O2 + 8 H(+)(in) = 4 Fe(III)-[cytochrome c] + 2 H2O + 4 H(+)(out)</text>
        <dbReference type="Rhea" id="RHEA:11436"/>
        <dbReference type="Rhea" id="RHEA-COMP:10350"/>
        <dbReference type="Rhea" id="RHEA-COMP:14399"/>
        <dbReference type="ChEBI" id="CHEBI:15377"/>
        <dbReference type="ChEBI" id="CHEBI:15378"/>
        <dbReference type="ChEBI" id="CHEBI:15379"/>
        <dbReference type="ChEBI" id="CHEBI:29033"/>
        <dbReference type="ChEBI" id="CHEBI:29034"/>
        <dbReference type="EC" id="7.1.1.9"/>
    </reaction>
    <physiologicalReaction direction="left-to-right" evidence="2">
        <dbReference type="Rhea" id="RHEA:11437"/>
    </physiologicalReaction>
</comment>
<comment type="subunit">
    <text evidence="1">Component of the cytochrome c oxidase (complex IV, CIV), a multisubunit enzyme composed of 14 subunits. The complex is composed of a catalytic core of 3 subunits MT-CO1, MT-CO2 and MT-CO3, encoded in the mitochondrial DNA, and 11 supernumerary subunits COX4I, COX5A, COX5B, COX6A, COX6B, COX6C, COX7A, COX7B, COX7C, COX8 and NDUFA4, which are encoded in the nuclear genome. The complex exists as a monomer or a dimer and forms supercomplexes (SCs) in the inner mitochondrial membrane with NADH-ubiquinone oxidoreductase (complex I, CI) and ubiquinol-cytochrome c oxidoreductase (cytochrome b-c1 complex, complex III, CIII), resulting in different assemblies (supercomplex SCI(1)III(2)IV(1) and megacomplex MCI(2)III(2)IV(2)).</text>
</comment>
<comment type="subcellular location">
    <subcellularLocation>
        <location evidence="1">Mitochondrion inner membrane</location>
        <topology evidence="1">Multi-pass membrane protein</topology>
    </subcellularLocation>
</comment>
<comment type="similarity">
    <text evidence="3">Belongs to the cytochrome c oxidase subunit 3 family.</text>
</comment>
<reference key="1">
    <citation type="journal article" date="1999" name="Mol. Phylogenet. Evol.">
        <title>Phylogenetic relationships in the bovid subfamily Antilopinae based on mitochondrial DNA sequences.</title>
        <authorList>
            <person name="Rebholz W.E.R."/>
            <person name="Harley E.H."/>
        </authorList>
    </citation>
    <scope>NUCLEOTIDE SEQUENCE [GENOMIC DNA]</scope>
    <source>
        <strain>Ssp. massaesyla</strain>
        <strain>Ssp. osiris</strain>
        <strain>Ssp. pelzelni</strain>
    </source>
</reference>
<gene>
    <name type="primary">MT-CO3</name>
    <name type="synonym">COIII</name>
    <name type="synonym">COXIII</name>
    <name type="synonym">MTCO3</name>
</gene>
<name>COX3_GAZDO</name>
<protein>
    <recommendedName>
        <fullName>Cytochrome c oxidase subunit 3</fullName>
        <ecNumber>7.1.1.9</ecNumber>
    </recommendedName>
    <alternativeName>
        <fullName>Cytochrome c oxidase polypeptide III</fullName>
    </alternativeName>
</protein>
<geneLocation type="mitochondrion"/>